<accession>A1RV58</accession>
<feature type="chain" id="PRO_1000050608" description="Glycerol-1-phosphate dehydrogenase [NAD(P)+]">
    <location>
        <begin position="1"/>
        <end position="342"/>
    </location>
</feature>
<feature type="binding site" evidence="1">
    <location>
        <begin position="84"/>
        <end position="88"/>
    </location>
    <ligand>
        <name>NAD(+)</name>
        <dbReference type="ChEBI" id="CHEBI:57540"/>
    </ligand>
</feature>
<feature type="binding site" evidence="1">
    <location>
        <begin position="106"/>
        <end position="109"/>
    </location>
    <ligand>
        <name>NAD(+)</name>
        <dbReference type="ChEBI" id="CHEBI:57540"/>
    </ligand>
</feature>
<feature type="binding site" evidence="1">
    <location>
        <position position="111"/>
    </location>
    <ligand>
        <name>substrate</name>
    </ligand>
</feature>
<feature type="binding site" evidence="1">
    <location>
        <position position="115"/>
    </location>
    <ligand>
        <name>NAD(+)</name>
        <dbReference type="ChEBI" id="CHEBI:57540"/>
    </ligand>
</feature>
<feature type="binding site" evidence="1">
    <location>
        <position position="160"/>
    </location>
    <ligand>
        <name>substrate</name>
    </ligand>
</feature>
<feature type="binding site" evidence="1">
    <location>
        <position position="160"/>
    </location>
    <ligand>
        <name>Zn(2+)</name>
        <dbReference type="ChEBI" id="CHEBI:29105"/>
        <note>catalytic</note>
    </ligand>
</feature>
<feature type="binding site" evidence="1">
    <location>
        <position position="241"/>
    </location>
    <ligand>
        <name>Zn(2+)</name>
        <dbReference type="ChEBI" id="CHEBI:29105"/>
        <note>catalytic</note>
    </ligand>
</feature>
<feature type="binding site" evidence="1">
    <location>
        <position position="245"/>
    </location>
    <ligand>
        <name>substrate</name>
    </ligand>
</feature>
<feature type="binding site" evidence="1">
    <location>
        <position position="260"/>
    </location>
    <ligand>
        <name>Zn(2+)</name>
        <dbReference type="ChEBI" id="CHEBI:29105"/>
        <note>catalytic</note>
    </ligand>
</feature>
<name>G1PDH_PYRIL</name>
<sequence length="342" mass="37155">MKQLESFEIPRTVIFGPGAISKIHQIVASQKASKILIITGRSVTLQYAKTIADMLTDRSVEVLRYDYIDIEKSGFDLVLGVGGGRPIDMAKVYSYVHKKPLVIVPTSASHDGIASPYVSYTLAQKMIKYGKIMASPIAIVADTSIILNAPSRLLKAGVGDLLGKIIAVRDWKLAHRLKGEEYSEYASHLSLTSYRIVVANAARIKNFVREEDVRVLVKALIGCGVAMGIAGSSRPCSGSEHLFAHAIEIRLEESGGDAIHGELVALGTIIMAYLHGINWRRVKKIAKLVGLPTTLREAGIDYDLAIEALVVAHTLRPDRYTILGDGLSKDAARRAIEATELA</sequence>
<comment type="function">
    <text evidence="1">Catalyzes the NAD(P)H-dependent reduction of dihydroxyacetonephosphate (DHAP or glycerone phosphate) to glycerol 1-phosphate (G1P). The G1P thus generated is used as the glycerophosphate backbone of phospholipids in the cellular membranes of Archaea.</text>
</comment>
<comment type="catalytic activity">
    <reaction evidence="1">
        <text>sn-glycerol 1-phosphate + NAD(+) = dihydroxyacetone phosphate + NADH + H(+)</text>
        <dbReference type="Rhea" id="RHEA:21412"/>
        <dbReference type="ChEBI" id="CHEBI:15378"/>
        <dbReference type="ChEBI" id="CHEBI:57540"/>
        <dbReference type="ChEBI" id="CHEBI:57642"/>
        <dbReference type="ChEBI" id="CHEBI:57685"/>
        <dbReference type="ChEBI" id="CHEBI:57945"/>
        <dbReference type="EC" id="1.1.1.261"/>
    </reaction>
</comment>
<comment type="catalytic activity">
    <reaction evidence="1">
        <text>sn-glycerol 1-phosphate + NADP(+) = dihydroxyacetone phosphate + NADPH + H(+)</text>
        <dbReference type="Rhea" id="RHEA:21416"/>
        <dbReference type="ChEBI" id="CHEBI:15378"/>
        <dbReference type="ChEBI" id="CHEBI:57642"/>
        <dbReference type="ChEBI" id="CHEBI:57685"/>
        <dbReference type="ChEBI" id="CHEBI:57783"/>
        <dbReference type="ChEBI" id="CHEBI:58349"/>
        <dbReference type="EC" id="1.1.1.261"/>
    </reaction>
</comment>
<comment type="cofactor">
    <cofactor evidence="1">
        <name>Zn(2+)</name>
        <dbReference type="ChEBI" id="CHEBI:29105"/>
    </cofactor>
    <text evidence="1">Binds 1 zinc ion per subunit.</text>
</comment>
<comment type="pathway">
    <text evidence="1">Membrane lipid metabolism; glycerophospholipid metabolism.</text>
</comment>
<comment type="subunit">
    <text evidence="1">Homodimer.</text>
</comment>
<comment type="subcellular location">
    <subcellularLocation>
        <location evidence="1">Cytoplasm</location>
    </subcellularLocation>
</comment>
<comment type="similarity">
    <text evidence="1">Belongs to the glycerol-1-phosphate dehydrogenase family.</text>
</comment>
<proteinExistence type="inferred from homology"/>
<organism>
    <name type="scientific">Pyrobaculum islandicum (strain DSM 4184 / JCM 9189 / GEO3)</name>
    <dbReference type="NCBI Taxonomy" id="384616"/>
    <lineage>
        <taxon>Archaea</taxon>
        <taxon>Thermoproteota</taxon>
        <taxon>Thermoprotei</taxon>
        <taxon>Thermoproteales</taxon>
        <taxon>Thermoproteaceae</taxon>
        <taxon>Pyrobaculum</taxon>
    </lineage>
</organism>
<gene>
    <name evidence="1" type="primary">egsA</name>
    <name type="ordered locus">Pisl_1689</name>
</gene>
<keyword id="KW-0963">Cytoplasm</keyword>
<keyword id="KW-0444">Lipid biosynthesis</keyword>
<keyword id="KW-0443">Lipid metabolism</keyword>
<keyword id="KW-0479">Metal-binding</keyword>
<keyword id="KW-0520">NAD</keyword>
<keyword id="KW-0521">NADP</keyword>
<keyword id="KW-0560">Oxidoreductase</keyword>
<keyword id="KW-0594">Phospholipid biosynthesis</keyword>
<keyword id="KW-1208">Phospholipid metabolism</keyword>
<keyword id="KW-0862">Zinc</keyword>
<reference key="1">
    <citation type="submission" date="2006-12" db="EMBL/GenBank/DDBJ databases">
        <title>Complete sequence of Pyrobaculum islandicum DSM 4184.</title>
        <authorList>
            <person name="Copeland A."/>
            <person name="Lucas S."/>
            <person name="Lapidus A."/>
            <person name="Barry K."/>
            <person name="Detter J.C."/>
            <person name="Glavina del Rio T."/>
            <person name="Dalin E."/>
            <person name="Tice H."/>
            <person name="Pitluck S."/>
            <person name="Meincke L."/>
            <person name="Brettin T."/>
            <person name="Bruce D."/>
            <person name="Han C."/>
            <person name="Tapia R."/>
            <person name="Gilna P."/>
            <person name="Schmutz J."/>
            <person name="Larimer F."/>
            <person name="Land M."/>
            <person name="Hauser L."/>
            <person name="Kyrpides N."/>
            <person name="Mikhailova N."/>
            <person name="Cozen A.E."/>
            <person name="Fitz-Gibbon S.T."/>
            <person name="House C.H."/>
            <person name="Saltikov C."/>
            <person name="Lowe T."/>
            <person name="Richardson P."/>
        </authorList>
    </citation>
    <scope>NUCLEOTIDE SEQUENCE [LARGE SCALE GENOMIC DNA]</scope>
    <source>
        <strain>DSM 4184 / JCM 9189 / GEO3</strain>
    </source>
</reference>
<protein>
    <recommendedName>
        <fullName evidence="1">Glycerol-1-phosphate dehydrogenase [NAD(P)+]</fullName>
        <shortName evidence="1">G1P dehydrogenase</shortName>
        <shortName evidence="1">G1PDH</shortName>
        <ecNumber evidence="1">1.1.1.261</ecNumber>
    </recommendedName>
    <alternativeName>
        <fullName evidence="1">Enantiomeric glycerophosphate synthase</fullName>
    </alternativeName>
    <alternativeName>
        <fullName evidence="1">sn-glycerol-1-phosphate dehydrogenase</fullName>
    </alternativeName>
</protein>
<dbReference type="EC" id="1.1.1.261" evidence="1"/>
<dbReference type="EMBL" id="CP000504">
    <property type="protein sequence ID" value="ABL88840.1"/>
    <property type="molecule type" value="Genomic_DNA"/>
</dbReference>
<dbReference type="RefSeq" id="WP_011763415.1">
    <property type="nucleotide sequence ID" value="NC_008701.1"/>
</dbReference>
<dbReference type="SMR" id="A1RV58"/>
<dbReference type="STRING" id="384616.Pisl_1689"/>
<dbReference type="GeneID" id="4618030"/>
<dbReference type="KEGG" id="pis:Pisl_1689"/>
<dbReference type="eggNOG" id="arCOG00982">
    <property type="taxonomic scope" value="Archaea"/>
</dbReference>
<dbReference type="HOGENOM" id="CLU_038362_0_0_2"/>
<dbReference type="OrthoDB" id="8656at2157"/>
<dbReference type="UniPathway" id="UPA00940"/>
<dbReference type="Proteomes" id="UP000002595">
    <property type="component" value="Chromosome"/>
</dbReference>
<dbReference type="GO" id="GO:0005737">
    <property type="term" value="C:cytoplasm"/>
    <property type="evidence" value="ECO:0007669"/>
    <property type="project" value="UniProtKB-SubCell"/>
</dbReference>
<dbReference type="GO" id="GO:0106357">
    <property type="term" value="F:glycerol-1-phosphate dehydrogenase (NAD+) activity"/>
    <property type="evidence" value="ECO:0007669"/>
    <property type="project" value="RHEA"/>
</dbReference>
<dbReference type="GO" id="GO:0106358">
    <property type="term" value="F:glycerol-1-phosphate dehydrogenase (NADP+) activity"/>
    <property type="evidence" value="ECO:0007669"/>
    <property type="project" value="RHEA"/>
</dbReference>
<dbReference type="GO" id="GO:0046872">
    <property type="term" value="F:metal ion binding"/>
    <property type="evidence" value="ECO:0007669"/>
    <property type="project" value="UniProtKB-KW"/>
</dbReference>
<dbReference type="GO" id="GO:0006650">
    <property type="term" value="P:glycerophospholipid metabolic process"/>
    <property type="evidence" value="ECO:0007669"/>
    <property type="project" value="UniProtKB-UniRule"/>
</dbReference>
<dbReference type="GO" id="GO:0008654">
    <property type="term" value="P:phospholipid biosynthetic process"/>
    <property type="evidence" value="ECO:0007669"/>
    <property type="project" value="UniProtKB-KW"/>
</dbReference>
<dbReference type="CDD" id="cd08173">
    <property type="entry name" value="Gro1PDH"/>
    <property type="match status" value="1"/>
</dbReference>
<dbReference type="Gene3D" id="3.40.50.1970">
    <property type="match status" value="1"/>
</dbReference>
<dbReference type="Gene3D" id="1.20.1090.10">
    <property type="entry name" value="Dehydroquinate synthase-like - alpha domain"/>
    <property type="match status" value="1"/>
</dbReference>
<dbReference type="HAMAP" id="MF_00497_A">
    <property type="entry name" value="G1P_dehydrogenase_A"/>
    <property type="match status" value="1"/>
</dbReference>
<dbReference type="InterPro" id="IPR023002">
    <property type="entry name" value="G1P_dehydrogenase_arc"/>
</dbReference>
<dbReference type="InterPro" id="IPR032837">
    <property type="entry name" value="G1PDH"/>
</dbReference>
<dbReference type="InterPro" id="IPR016205">
    <property type="entry name" value="Glycerol_DH"/>
</dbReference>
<dbReference type="PANTHER" id="PTHR43616">
    <property type="entry name" value="GLYCEROL DEHYDROGENASE"/>
    <property type="match status" value="1"/>
</dbReference>
<dbReference type="PANTHER" id="PTHR43616:SF5">
    <property type="entry name" value="GLYCEROL DEHYDROGENASE 1"/>
    <property type="match status" value="1"/>
</dbReference>
<dbReference type="Pfam" id="PF13685">
    <property type="entry name" value="Fe-ADH_2"/>
    <property type="match status" value="1"/>
</dbReference>
<dbReference type="PIRSF" id="PIRSF000112">
    <property type="entry name" value="Glycerol_dehydrogenase"/>
    <property type="match status" value="1"/>
</dbReference>
<dbReference type="SUPFAM" id="SSF56796">
    <property type="entry name" value="Dehydroquinate synthase-like"/>
    <property type="match status" value="1"/>
</dbReference>
<evidence type="ECO:0000255" key="1">
    <source>
        <dbReference type="HAMAP-Rule" id="MF_00497"/>
    </source>
</evidence>